<evidence type="ECO:0000255" key="1">
    <source>
        <dbReference type="HAMAP-Rule" id="MF_00194"/>
    </source>
</evidence>
<name>RDGC_ECO8A</name>
<comment type="function">
    <text evidence="1">May be involved in recombination.</text>
</comment>
<comment type="subcellular location">
    <subcellularLocation>
        <location evidence="1">Cytoplasm</location>
        <location evidence="1">Nucleoid</location>
    </subcellularLocation>
</comment>
<comment type="similarity">
    <text evidence="1">Belongs to the RdgC family.</text>
</comment>
<proteinExistence type="inferred from homology"/>
<dbReference type="EMBL" id="CU928160">
    <property type="protein sequence ID" value="CAQ97265.1"/>
    <property type="molecule type" value="Genomic_DNA"/>
</dbReference>
<dbReference type="RefSeq" id="WP_001298537.1">
    <property type="nucleotide sequence ID" value="NC_011741.1"/>
</dbReference>
<dbReference type="SMR" id="B7M3N2"/>
<dbReference type="GeneID" id="75202816"/>
<dbReference type="KEGG" id="ecr:ECIAI1_0393"/>
<dbReference type="HOGENOM" id="CLU_052038_1_1_6"/>
<dbReference type="GO" id="GO:0043590">
    <property type="term" value="C:bacterial nucleoid"/>
    <property type="evidence" value="ECO:0007669"/>
    <property type="project" value="TreeGrafter"/>
</dbReference>
<dbReference type="GO" id="GO:0005737">
    <property type="term" value="C:cytoplasm"/>
    <property type="evidence" value="ECO:0007669"/>
    <property type="project" value="UniProtKB-UniRule"/>
</dbReference>
<dbReference type="GO" id="GO:0003690">
    <property type="term" value="F:double-stranded DNA binding"/>
    <property type="evidence" value="ECO:0007669"/>
    <property type="project" value="TreeGrafter"/>
</dbReference>
<dbReference type="GO" id="GO:0006310">
    <property type="term" value="P:DNA recombination"/>
    <property type="evidence" value="ECO:0007669"/>
    <property type="project" value="UniProtKB-UniRule"/>
</dbReference>
<dbReference type="GO" id="GO:0000018">
    <property type="term" value="P:regulation of DNA recombination"/>
    <property type="evidence" value="ECO:0007669"/>
    <property type="project" value="TreeGrafter"/>
</dbReference>
<dbReference type="HAMAP" id="MF_00194">
    <property type="entry name" value="RdgC"/>
    <property type="match status" value="1"/>
</dbReference>
<dbReference type="InterPro" id="IPR007476">
    <property type="entry name" value="RdgC"/>
</dbReference>
<dbReference type="NCBIfam" id="NF001460">
    <property type="entry name" value="PRK00321.1-1"/>
    <property type="match status" value="1"/>
</dbReference>
<dbReference type="NCBIfam" id="NF001462">
    <property type="entry name" value="PRK00321.1-3"/>
    <property type="match status" value="1"/>
</dbReference>
<dbReference type="NCBIfam" id="NF001464">
    <property type="entry name" value="PRK00321.1-5"/>
    <property type="match status" value="1"/>
</dbReference>
<dbReference type="PANTHER" id="PTHR38103">
    <property type="entry name" value="RECOMBINATION-ASSOCIATED PROTEIN RDGC"/>
    <property type="match status" value="1"/>
</dbReference>
<dbReference type="PANTHER" id="PTHR38103:SF1">
    <property type="entry name" value="RECOMBINATION-ASSOCIATED PROTEIN RDGC"/>
    <property type="match status" value="1"/>
</dbReference>
<dbReference type="Pfam" id="PF04381">
    <property type="entry name" value="RdgC"/>
    <property type="match status" value="1"/>
</dbReference>
<accession>B7M3N2</accession>
<organism>
    <name type="scientific">Escherichia coli O8 (strain IAI1)</name>
    <dbReference type="NCBI Taxonomy" id="585034"/>
    <lineage>
        <taxon>Bacteria</taxon>
        <taxon>Pseudomonadati</taxon>
        <taxon>Pseudomonadota</taxon>
        <taxon>Gammaproteobacteria</taxon>
        <taxon>Enterobacterales</taxon>
        <taxon>Enterobacteriaceae</taxon>
        <taxon>Escherichia</taxon>
    </lineage>
</organism>
<feature type="chain" id="PRO_1000118628" description="Recombination-associated protein RdgC">
    <location>
        <begin position="1"/>
        <end position="303"/>
    </location>
</feature>
<gene>
    <name evidence="1" type="primary">rdgC</name>
    <name type="ordered locus">ECIAI1_0393</name>
</gene>
<sequence>MLWFKNLMVYRLSREISLRAEEMEKQLASMAFTPCGSQDMAKMGWVPPMGSHSDALTHVANGQIVICARKEEKILPSPVIKQALEAKIAKLEAEQARKLKKTEKDSLKDEVLHSLLPRAFSRFSQTMMWIDTVNGLIMVDCASAKKAEDTLALLRKSLGSLPVVPLSMENPIELTLTEWVRSGSAAQGFQLLDEAELKSLLEDGGVIRAKKQDLTSEEITNHIEAGKVVTKLALDWQQRIQFVMCDDGSLKRLKFCDELRDQNEDIDREDFAQRFDADFILMTGELAALIQNLIEGLGGEAQR</sequence>
<protein>
    <recommendedName>
        <fullName evidence="1">Recombination-associated protein RdgC</fullName>
    </recommendedName>
</protein>
<keyword id="KW-0963">Cytoplasm</keyword>
<keyword id="KW-0233">DNA recombination</keyword>
<reference key="1">
    <citation type="journal article" date="2009" name="PLoS Genet.">
        <title>Organised genome dynamics in the Escherichia coli species results in highly diverse adaptive paths.</title>
        <authorList>
            <person name="Touchon M."/>
            <person name="Hoede C."/>
            <person name="Tenaillon O."/>
            <person name="Barbe V."/>
            <person name="Baeriswyl S."/>
            <person name="Bidet P."/>
            <person name="Bingen E."/>
            <person name="Bonacorsi S."/>
            <person name="Bouchier C."/>
            <person name="Bouvet O."/>
            <person name="Calteau A."/>
            <person name="Chiapello H."/>
            <person name="Clermont O."/>
            <person name="Cruveiller S."/>
            <person name="Danchin A."/>
            <person name="Diard M."/>
            <person name="Dossat C."/>
            <person name="Karoui M.E."/>
            <person name="Frapy E."/>
            <person name="Garry L."/>
            <person name="Ghigo J.M."/>
            <person name="Gilles A.M."/>
            <person name="Johnson J."/>
            <person name="Le Bouguenec C."/>
            <person name="Lescat M."/>
            <person name="Mangenot S."/>
            <person name="Martinez-Jehanne V."/>
            <person name="Matic I."/>
            <person name="Nassif X."/>
            <person name="Oztas S."/>
            <person name="Petit M.A."/>
            <person name="Pichon C."/>
            <person name="Rouy Z."/>
            <person name="Ruf C.S."/>
            <person name="Schneider D."/>
            <person name="Tourret J."/>
            <person name="Vacherie B."/>
            <person name="Vallenet D."/>
            <person name="Medigue C."/>
            <person name="Rocha E.P.C."/>
            <person name="Denamur E."/>
        </authorList>
    </citation>
    <scope>NUCLEOTIDE SEQUENCE [LARGE SCALE GENOMIC DNA]</scope>
    <source>
        <strain>IAI1</strain>
    </source>
</reference>